<feature type="chain" id="PRO_0000447987" description="Zinc finger protein 142">
    <location>
        <begin position="1"/>
        <end position="1843"/>
    </location>
</feature>
<feature type="zinc finger region" description="C2H2-type 1" evidence="2">
    <location>
        <begin position="103"/>
        <end position="127"/>
    </location>
</feature>
<feature type="zinc finger region" description="C2H2-type 2" evidence="2">
    <location>
        <begin position="164"/>
        <end position="186"/>
    </location>
</feature>
<feature type="zinc finger region" description="C2H2-type 3" evidence="2">
    <location>
        <begin position="363"/>
        <end position="385"/>
    </location>
</feature>
<feature type="zinc finger region" description="C2H2-type 4; degenerate" evidence="2">
    <location>
        <begin position="391"/>
        <end position="413"/>
    </location>
</feature>
<feature type="zinc finger region" description="C2H2-type 5" evidence="2">
    <location>
        <begin position="453"/>
        <end position="475"/>
    </location>
</feature>
<feature type="zinc finger region" description="C2H2-type 6" evidence="2">
    <location>
        <begin position="543"/>
        <end position="566"/>
    </location>
</feature>
<feature type="zinc finger region" description="C2H2-type 7" evidence="2">
    <location>
        <begin position="601"/>
        <end position="623"/>
    </location>
</feature>
<feature type="zinc finger region" description="C2H2-type 8" evidence="2">
    <location>
        <begin position="629"/>
        <end position="651"/>
    </location>
</feature>
<feature type="zinc finger region" description="C2H2-type 9" evidence="2">
    <location>
        <begin position="657"/>
        <end position="679"/>
    </location>
</feature>
<feature type="zinc finger region" description="C2H2-type 10" evidence="2">
    <location>
        <begin position="685"/>
        <end position="707"/>
    </location>
</feature>
<feature type="zinc finger region" description="C2H2-type 11" evidence="2">
    <location>
        <begin position="744"/>
        <end position="767"/>
    </location>
</feature>
<feature type="zinc finger region" description="C2H2-type 12" evidence="2">
    <location>
        <begin position="1331"/>
        <end position="1354"/>
    </location>
</feature>
<feature type="zinc finger region" description="C2H2-type 13" evidence="2">
    <location>
        <begin position="1388"/>
        <end position="1411"/>
    </location>
</feature>
<feature type="zinc finger region" description="C2H2-type 14" evidence="2">
    <location>
        <begin position="1446"/>
        <end position="1469"/>
    </location>
</feature>
<feature type="zinc finger region" description="C2H2-type 15" evidence="2">
    <location>
        <begin position="1514"/>
        <end position="1537"/>
    </location>
</feature>
<feature type="zinc finger region" description="C2H2-type 16" evidence="2">
    <location>
        <begin position="1608"/>
        <end position="1630"/>
    </location>
</feature>
<feature type="zinc finger region" description="C2H2-type 17" evidence="2">
    <location>
        <begin position="1636"/>
        <end position="1658"/>
    </location>
</feature>
<feature type="zinc finger region" description="C2H2-type 18" evidence="2">
    <location>
        <begin position="1664"/>
        <end position="1686"/>
    </location>
</feature>
<feature type="zinc finger region" description="C2H2-type 19" evidence="2">
    <location>
        <begin position="1692"/>
        <end position="1715"/>
    </location>
</feature>
<feature type="zinc finger region" description="C2H2-type 20" evidence="2">
    <location>
        <begin position="1721"/>
        <end position="1743"/>
    </location>
</feature>
<feature type="zinc finger region" description="C2H2-type 21" evidence="2">
    <location>
        <begin position="1749"/>
        <end position="1771"/>
    </location>
</feature>
<feature type="region of interest" description="Disordered" evidence="3">
    <location>
        <begin position="294"/>
        <end position="357"/>
    </location>
</feature>
<feature type="region of interest" description="Disordered" evidence="3">
    <location>
        <begin position="819"/>
        <end position="888"/>
    </location>
</feature>
<feature type="region of interest" description="Disordered" evidence="3">
    <location>
        <begin position="1103"/>
        <end position="1177"/>
    </location>
</feature>
<feature type="region of interest" description="Disordered" evidence="3">
    <location>
        <begin position="1795"/>
        <end position="1843"/>
    </location>
</feature>
<feature type="compositionally biased region" description="Acidic residues" evidence="3">
    <location>
        <begin position="318"/>
        <end position="329"/>
    </location>
</feature>
<feature type="compositionally biased region" description="Basic and acidic residues" evidence="3">
    <location>
        <begin position="330"/>
        <end position="340"/>
    </location>
</feature>
<feature type="compositionally biased region" description="Basic and acidic residues" evidence="3">
    <location>
        <begin position="837"/>
        <end position="846"/>
    </location>
</feature>
<feature type="compositionally biased region" description="Pro residues" evidence="3">
    <location>
        <begin position="1157"/>
        <end position="1167"/>
    </location>
</feature>
<feature type="compositionally biased region" description="Polar residues" evidence="3">
    <location>
        <begin position="1168"/>
        <end position="1177"/>
    </location>
</feature>
<feature type="compositionally biased region" description="Pro residues" evidence="3">
    <location>
        <begin position="1829"/>
        <end position="1843"/>
    </location>
</feature>
<feature type="modified residue" description="Phosphoserine" evidence="1">
    <location>
        <position position="354"/>
    </location>
</feature>
<feature type="cross-link" description="Glycyl lysine isopeptide (Lys-Gly) (interchain with G-Cter in SUMO2)" evidence="1">
    <location>
        <position position="794"/>
    </location>
</feature>
<feature type="cross-link" description="Glycyl lysine isopeptide (Lys-Gly) (interchain with G-Cter in SUMO2)" evidence="1">
    <location>
        <position position="1353"/>
    </location>
</feature>
<feature type="cross-link" description="Glycyl lysine isopeptide (Lys-Gly) (interchain with G-Cter in SUMO2)" evidence="1">
    <location>
        <position position="1402"/>
    </location>
</feature>
<feature type="cross-link" description="Glycyl lysine isopeptide (Lys-Gly) (interchain with G-Cter in SUMO2)" evidence="1">
    <location>
        <position position="1747"/>
    </location>
</feature>
<feature type="splice variant" id="VSP_060316" description="In isoform 3.">
    <location>
        <begin position="94"/>
        <end position="294"/>
    </location>
</feature>
<feature type="splice variant" id="VSP_060317" description="In isoform 2.">
    <location>
        <begin position="94"/>
        <end position="196"/>
    </location>
</feature>
<feature type="sequence conflict" description="In Ref. 2; BAC34881." evidence="5" ref="2">
    <original>L</original>
    <variation>M</variation>
    <location>
        <position position="1764"/>
    </location>
</feature>
<proteinExistence type="evidence at transcript level"/>
<sequence>MTDPVLASQLANGTGEMDGLCSELLLIPPPLSNHGILGPVQNTCASGELAPLPADPGCLLVEATATEEGPGNMEIIVEAVTGTLSPGAPEETSGVLVKVVEVYFCERCEQSFAEPTLLSVHQCTETHIQAVQDLSSPPCSVELPPSNLALRGPLQDPSLPDSPLPCPVCRQEFVQPQALKSHFKIHRVTPNMFSCPESGCVFSAEDRKGLQNHLRQTHKAVPVPCSFRGCSLLFGSQQGMELHRQAHYPFHCSHCSFMGSNVKLFRQHQRSHGASARGELSAAVQGLPSQELLPAAKLPPGHREPSEEASTPLPGQESAEEEDAEEEESVTQKDSQKVMDKSQGAQQLEGHVGSGTESLFKTHMCPECKRCFKKRTHLVEHLHLHFPDPSLQCPNCQKFFTSKSKLKTHLLRELGEKAHRCPLCHYSAVERNALNRHMASMHEDISNFYSDTYACPVCREEFRLSQALKEHLKSHTAAAAAEPLPLHCFQEGCTYVAPDRKAFLKHLKEIHGVRAVECRHHSCPMLFATAEAMEAHHKSHYAFHCPHCDFACSNKHLFRKHKKQGHPGSEELRCTFCPFATFNPVAYQDHVGKMHAYEKIHQCSECNFATAHKRVLIRHMLLHTGEKPHKCELCDFTCRDVSYLSKHMLTHSNTKDYMCTECGYVTKWKHYLSVHMRKHAGDLRYQCNQCSYRCHRADQLSSHKLRHQGKSLMCEVCAFACKRKYELQKHMASQHHPGTPAPLYPCRYCSYQSRHKQALLSHENCKHTHLREFHCALCDYRTFSNTTLFFHKRKVHGYMPGDQVWQFCNASQELEGARQCLAPPSDSGPSSQLSAQPEREDREHEIVANSNMDQALPETNEEASPKRQDGIEAPQEDDQVDSPSLGEVEEGGCTLHLEALRVELEPETEPLPLEELTETATVEFRPLDPSGPLGTERPGGLEEPALSSFDSIETPALVAEEEPVVEKLASEPPRNPLISEEAPNTFKAALTAETVPLPPFPESESLLKAMRRQDKEQAEALVLEGRVQMVVIQGEGRAFRCPHCPFITRREKALTLHSKSGCQGRREPLLCPECGASFKQQRGLSTHMMKKCPVLLKKNKALPKPVSPTLHPQLPDNQASQDAESRKPPPLPSKVELLLPKDAPSDLPGGPGVEEPLPTPSDFPTSPPENSLPTGTSEKFHFEQGKFHCSSCTFLCSRLSSITSHVTEGCRGGRGQKRKRGRPQTHAVVLPLNNGDSTLLNTGSTESSPSDGDTAVVQKQKGALFSCPTCPFSCQQERTLRTHQTQGCPLKSGDLHCGLCPFTAPAAAALRLHQKRRHPTASPASGPRPLLQCGDCGFTCKQSRCLQQHRRLKHEGVKPHQCPFCDFSTTRRYRLEAHQSRHTGVGRIPCSSCPQTFGTNSKLRLHQLRVHDKTPTHFCPLCDYSGYLRHDITRHVNSCHQGTPSFSCTQCEAQFSSETALKQHALRRHPEPTPPSSGCPVEVTEGPLHCSHCGLLCPSPASLRGHTRKQHPRLECGACQESFPNRPALDEHRRQHHFSHRCQLCSFAARERVGLVKHYLEQHEESSTAPSDGDAGQPSLCCPFCDFACRHQLVLDHHVKGHGGTRLYKCTDCAYSTKNRQKITWHSRIHTGEKPYHCHLCAYACADPSRLKYHMRIHKEERKYLCPECGYKCKWVNQLKYHMTKHTGLKPYQCPECEYCTNRADALRVHRETRHREARAFMCEQCGKAFKTRFLLRTHLRKHSEAKPYVCNVCHRAFRWAAGLRHHALTHTDRHPFFCRLCSYKAKQKFQVVKHVRRHHPDQADPNQGVGKDPTTPTVHLHDVKLEDPSPPAPPAPSTGPEG</sequence>
<protein>
    <recommendedName>
        <fullName evidence="5">Zinc finger protein 142</fullName>
    </recommendedName>
</protein>
<accession>G5E869</accession>
<accession>E9PY67</accession>
<accession>Q3V1C1</accession>
<accession>Q8BWJ0</accession>
<accession>Q8BWL4</accession>
<accession>Q8CHH6</accession>
<dbReference type="EMBL" id="AB093218">
    <property type="protein sequence ID" value="BAC41402.1"/>
    <property type="status" value="ALT_INIT"/>
    <property type="molecule type" value="mRNA"/>
</dbReference>
<dbReference type="EMBL" id="AK052201">
    <property type="protein sequence ID" value="BAC34881.1"/>
    <property type="molecule type" value="mRNA"/>
</dbReference>
<dbReference type="EMBL" id="AK052359">
    <property type="protein sequence ID" value="BAC34956.1"/>
    <property type="molecule type" value="mRNA"/>
</dbReference>
<dbReference type="EMBL" id="AK132550">
    <property type="protein sequence ID" value="BAE21230.1"/>
    <property type="molecule type" value="mRNA"/>
</dbReference>
<dbReference type="EMBL" id="AC117610">
    <property type="status" value="NOT_ANNOTATED_CDS"/>
    <property type="molecule type" value="Genomic_DNA"/>
</dbReference>
<dbReference type="EMBL" id="CH466548">
    <property type="protein sequence ID" value="EDL00334.1"/>
    <property type="molecule type" value="Genomic_DNA"/>
</dbReference>
<dbReference type="CCDS" id="CCDS35618.1">
    <molecule id="G5E869-2"/>
</dbReference>
<dbReference type="CCDS" id="CCDS78619.1">
    <molecule id="G5E869-1"/>
</dbReference>
<dbReference type="RefSeq" id="NP_001297597.1">
    <molecule id="G5E869-1"/>
    <property type="nucleotide sequence ID" value="NM_001310668.1"/>
</dbReference>
<dbReference type="RefSeq" id="NP_084164.1">
    <molecule id="G5E869-2"/>
    <property type="nucleotide sequence ID" value="NM_029888.3"/>
</dbReference>
<dbReference type="RefSeq" id="XP_006496381.1">
    <property type="nucleotide sequence ID" value="XM_006496318.2"/>
</dbReference>
<dbReference type="RefSeq" id="XP_006496382.1">
    <property type="nucleotide sequence ID" value="XM_006496319.2"/>
</dbReference>
<dbReference type="RefSeq" id="XP_006496384.1">
    <property type="nucleotide sequence ID" value="XM_006496321.2"/>
</dbReference>
<dbReference type="FunCoup" id="G5E869">
    <property type="interactions" value="2906"/>
</dbReference>
<dbReference type="STRING" id="10090.ENSMUSP00000027315"/>
<dbReference type="GlyGen" id="G5E869">
    <property type="glycosylation" value="2 sites"/>
</dbReference>
<dbReference type="iPTMnet" id="G5E869"/>
<dbReference type="PhosphoSitePlus" id="G5E869"/>
<dbReference type="jPOST" id="G5E869"/>
<dbReference type="PaxDb" id="10090-ENSMUSP00000109366"/>
<dbReference type="ProteomicsDB" id="339071"/>
<dbReference type="ProteomicsDB" id="341149">
    <molecule id="G5E869-1"/>
</dbReference>
<dbReference type="ProteomicsDB" id="352915"/>
<dbReference type="Antibodypedia" id="56468">
    <property type="antibodies" value="22 antibodies from 10 providers"/>
</dbReference>
<dbReference type="Ensembl" id="ENSMUST00000027315.14">
    <molecule id="G5E869-1"/>
    <property type="protein sequence ID" value="ENSMUSP00000027315.8"/>
    <property type="gene ID" value="ENSMUSG00000026135.18"/>
</dbReference>
<dbReference type="Ensembl" id="ENSMUST00000066986.13">
    <molecule id="G5E869-3"/>
    <property type="protein sequence ID" value="ENSMUSP00000065149.7"/>
    <property type="gene ID" value="ENSMUSG00000026135.18"/>
</dbReference>
<dbReference type="Ensembl" id="ENSMUST00000113737.8">
    <molecule id="G5E869-2"/>
    <property type="protein sequence ID" value="ENSMUSP00000109366.2"/>
    <property type="gene ID" value="ENSMUSG00000026135.18"/>
</dbReference>
<dbReference type="GeneID" id="77264"/>
<dbReference type="KEGG" id="mmu:77264"/>
<dbReference type="UCSC" id="uc007bmm.1">
    <property type="organism name" value="mouse"/>
</dbReference>
<dbReference type="UCSC" id="uc007bmn.1">
    <molecule id="G5E869-1"/>
    <property type="organism name" value="mouse"/>
</dbReference>
<dbReference type="AGR" id="MGI:1924514"/>
<dbReference type="CTD" id="77264"/>
<dbReference type="MGI" id="MGI:1924514">
    <property type="gene designation" value="Zfp142"/>
</dbReference>
<dbReference type="VEuPathDB" id="HostDB:ENSMUSG00000026135"/>
<dbReference type="eggNOG" id="KOG1721">
    <property type="taxonomic scope" value="Eukaryota"/>
</dbReference>
<dbReference type="GeneTree" id="ENSGT00940000163074"/>
<dbReference type="HOGENOM" id="CLU_001774_0_0_1"/>
<dbReference type="InParanoid" id="G5E869"/>
<dbReference type="OMA" id="KRRFFRC"/>
<dbReference type="OrthoDB" id="6077919at2759"/>
<dbReference type="PhylomeDB" id="G5E869"/>
<dbReference type="TreeFam" id="TF327469"/>
<dbReference type="BioGRID-ORCS" id="77264">
    <property type="hits" value="3 hits in 61 CRISPR screens"/>
</dbReference>
<dbReference type="PRO" id="PR:G5E869"/>
<dbReference type="Proteomes" id="UP000000589">
    <property type="component" value="Chromosome 1"/>
</dbReference>
<dbReference type="RNAct" id="G5E869">
    <property type="molecule type" value="protein"/>
</dbReference>
<dbReference type="Bgee" id="ENSMUSG00000026135">
    <property type="expression patterns" value="Expressed in animal zygote and 242 other cell types or tissues"/>
</dbReference>
<dbReference type="ExpressionAtlas" id="G5E869">
    <property type="expression patterns" value="baseline and differential"/>
</dbReference>
<dbReference type="GO" id="GO:0005634">
    <property type="term" value="C:nucleus"/>
    <property type="evidence" value="ECO:0007669"/>
    <property type="project" value="UniProtKB-SubCell"/>
</dbReference>
<dbReference type="GO" id="GO:0003677">
    <property type="term" value="F:DNA binding"/>
    <property type="evidence" value="ECO:0007669"/>
    <property type="project" value="UniProtKB-KW"/>
</dbReference>
<dbReference type="GO" id="GO:0008270">
    <property type="term" value="F:zinc ion binding"/>
    <property type="evidence" value="ECO:0007669"/>
    <property type="project" value="UniProtKB-KW"/>
</dbReference>
<dbReference type="GO" id="GO:0010468">
    <property type="term" value="P:regulation of gene expression"/>
    <property type="evidence" value="ECO:0007669"/>
    <property type="project" value="UniProtKB-ARBA"/>
</dbReference>
<dbReference type="FunFam" id="3.30.160.60:FF:004680">
    <property type="match status" value="1"/>
</dbReference>
<dbReference type="FunFam" id="3.30.160.60:FF:000614">
    <property type="entry name" value="Zinc finger protein 142"/>
    <property type="match status" value="1"/>
</dbReference>
<dbReference type="FunFam" id="3.30.160.60:FF:000883">
    <property type="entry name" value="Zinc finger protein 142"/>
    <property type="match status" value="1"/>
</dbReference>
<dbReference type="FunFam" id="3.30.160.60:FF:000891">
    <property type="entry name" value="Zinc finger protein 142"/>
    <property type="match status" value="1"/>
</dbReference>
<dbReference type="FunFam" id="3.30.160.60:FF:001033">
    <property type="entry name" value="Zinc finger protein 142"/>
    <property type="match status" value="1"/>
</dbReference>
<dbReference type="FunFam" id="3.30.160.60:FF:001041">
    <property type="entry name" value="Zinc finger protein 142"/>
    <property type="match status" value="1"/>
</dbReference>
<dbReference type="FunFam" id="3.30.160.60:FF:001062">
    <property type="entry name" value="Zinc finger protein 142"/>
    <property type="match status" value="1"/>
</dbReference>
<dbReference type="FunFam" id="3.30.160.60:FF:001127">
    <property type="entry name" value="Zinc finger protein 142"/>
    <property type="match status" value="1"/>
</dbReference>
<dbReference type="FunFam" id="3.30.160.60:FF:001208">
    <property type="entry name" value="Zinc finger protein 142"/>
    <property type="match status" value="1"/>
</dbReference>
<dbReference type="FunFam" id="3.30.160.60:FF:001516">
    <property type="entry name" value="Zinc finger protein 142"/>
    <property type="match status" value="1"/>
</dbReference>
<dbReference type="FunFam" id="3.30.160.60:FF:001595">
    <property type="entry name" value="Zinc finger protein 142"/>
    <property type="match status" value="1"/>
</dbReference>
<dbReference type="FunFam" id="3.30.160.60:FF:001657">
    <property type="entry name" value="Zinc finger protein 142"/>
    <property type="match status" value="1"/>
</dbReference>
<dbReference type="FunFam" id="3.30.160.60:FF:001707">
    <property type="entry name" value="Zinc finger protein 142"/>
    <property type="match status" value="1"/>
</dbReference>
<dbReference type="FunFam" id="3.30.160.60:FF:001783">
    <property type="entry name" value="Zinc finger protein 142"/>
    <property type="match status" value="1"/>
</dbReference>
<dbReference type="FunFam" id="3.30.160.60:FF:002117">
    <property type="entry name" value="Zinc finger protein 142"/>
    <property type="match status" value="1"/>
</dbReference>
<dbReference type="FunFam" id="3.30.160.60:FF:003497">
    <property type="entry name" value="Zinc finger protein 142"/>
    <property type="match status" value="1"/>
</dbReference>
<dbReference type="FunFam" id="3.30.160.60:FF:000803">
    <property type="entry name" value="zinc finger protein 142"/>
    <property type="match status" value="1"/>
</dbReference>
<dbReference type="FunFam" id="3.30.160.60:FF:000994">
    <property type="entry name" value="zinc finger protein 142"/>
    <property type="match status" value="1"/>
</dbReference>
<dbReference type="FunFam" id="3.30.160.60:FF:002452">
    <property type="entry name" value="zinc finger protein 142 isoform X4"/>
    <property type="match status" value="1"/>
</dbReference>
<dbReference type="Gene3D" id="3.30.160.60">
    <property type="entry name" value="Classic Zinc Finger"/>
    <property type="match status" value="20"/>
</dbReference>
<dbReference type="InterPro" id="IPR056438">
    <property type="entry name" value="Znf-C2H2_CTCF"/>
</dbReference>
<dbReference type="InterPro" id="IPR036236">
    <property type="entry name" value="Znf_C2H2_sf"/>
</dbReference>
<dbReference type="InterPro" id="IPR013087">
    <property type="entry name" value="Znf_C2H2_type"/>
</dbReference>
<dbReference type="PANTHER" id="PTHR24379">
    <property type="entry name" value="KRAB AND ZINC FINGER DOMAIN-CONTAINING"/>
    <property type="match status" value="1"/>
</dbReference>
<dbReference type="PANTHER" id="PTHR24379:SF117">
    <property type="entry name" value="ZINC FINGER PROTEIN WECKLE"/>
    <property type="match status" value="1"/>
</dbReference>
<dbReference type="Pfam" id="PF00096">
    <property type="entry name" value="zf-C2H2"/>
    <property type="match status" value="4"/>
</dbReference>
<dbReference type="Pfam" id="PF23611">
    <property type="entry name" value="zf-C2H2_16"/>
    <property type="match status" value="4"/>
</dbReference>
<dbReference type="Pfam" id="PF23612">
    <property type="entry name" value="zf-C2H2_ZN142"/>
    <property type="match status" value="2"/>
</dbReference>
<dbReference type="Pfam" id="PF23574">
    <property type="entry name" value="zf-C2H2_ZNF142_18"/>
    <property type="match status" value="1"/>
</dbReference>
<dbReference type="SMART" id="SM00355">
    <property type="entry name" value="ZnF_C2H2"/>
    <property type="match status" value="41"/>
</dbReference>
<dbReference type="SUPFAM" id="SSF57667">
    <property type="entry name" value="beta-beta-alpha zinc fingers"/>
    <property type="match status" value="12"/>
</dbReference>
<dbReference type="PROSITE" id="PS00028">
    <property type="entry name" value="ZINC_FINGER_C2H2_1"/>
    <property type="match status" value="20"/>
</dbReference>
<dbReference type="PROSITE" id="PS50157">
    <property type="entry name" value="ZINC_FINGER_C2H2_2"/>
    <property type="match status" value="21"/>
</dbReference>
<name>ZN142_MOUSE</name>
<organism>
    <name type="scientific">Mus musculus</name>
    <name type="common">Mouse</name>
    <dbReference type="NCBI Taxonomy" id="10090"/>
    <lineage>
        <taxon>Eukaryota</taxon>
        <taxon>Metazoa</taxon>
        <taxon>Chordata</taxon>
        <taxon>Craniata</taxon>
        <taxon>Vertebrata</taxon>
        <taxon>Euteleostomi</taxon>
        <taxon>Mammalia</taxon>
        <taxon>Eutheria</taxon>
        <taxon>Euarchontoglires</taxon>
        <taxon>Glires</taxon>
        <taxon>Rodentia</taxon>
        <taxon>Myomorpha</taxon>
        <taxon>Muroidea</taxon>
        <taxon>Muridae</taxon>
        <taxon>Murinae</taxon>
        <taxon>Mus</taxon>
        <taxon>Mus</taxon>
    </lineage>
</organism>
<keyword id="KW-0025">Alternative splicing</keyword>
<keyword id="KW-0238">DNA-binding</keyword>
<keyword id="KW-1017">Isopeptide bond</keyword>
<keyword id="KW-0479">Metal-binding</keyword>
<keyword id="KW-0539">Nucleus</keyword>
<keyword id="KW-0597">Phosphoprotein</keyword>
<keyword id="KW-1185">Reference proteome</keyword>
<keyword id="KW-0677">Repeat</keyword>
<keyword id="KW-0804">Transcription</keyword>
<keyword id="KW-0805">Transcription regulation</keyword>
<keyword id="KW-0832">Ubl conjugation</keyword>
<keyword id="KW-0862">Zinc</keyword>
<keyword id="KW-0863">Zinc-finger</keyword>
<evidence type="ECO:0000250" key="1">
    <source>
        <dbReference type="UniProtKB" id="P52746"/>
    </source>
</evidence>
<evidence type="ECO:0000255" key="2">
    <source>
        <dbReference type="PROSITE-ProRule" id="PRU00042"/>
    </source>
</evidence>
<evidence type="ECO:0000256" key="3">
    <source>
        <dbReference type="SAM" id="MobiDB-lite"/>
    </source>
</evidence>
<evidence type="ECO:0000303" key="4">
    <source>
    </source>
</evidence>
<evidence type="ECO:0000305" key="5"/>
<evidence type="ECO:0000312" key="6">
    <source>
        <dbReference type="MGI" id="MGI:1924514"/>
    </source>
</evidence>
<gene>
    <name evidence="1" type="primary">Znf142</name>
    <name evidence="4" type="synonym">Kiaa0236</name>
    <name evidence="6" type="synonym">Zfp142</name>
</gene>
<comment type="function">
    <text evidence="5">May be involved in transcriptional regulation.</text>
</comment>
<comment type="subcellular location">
    <subcellularLocation>
        <location evidence="5">Nucleus</location>
    </subcellularLocation>
</comment>
<comment type="alternative products">
    <event type="alternative splicing"/>
    <isoform>
        <id>G5E869-1</id>
        <name>1</name>
        <sequence type="displayed"/>
    </isoform>
    <isoform>
        <id>G5E869-2</id>
        <name>2</name>
        <sequence type="described" ref="VSP_060317"/>
    </isoform>
    <isoform>
        <id>G5E869-3</id>
        <name>3</name>
        <sequence type="described" ref="VSP_060316"/>
    </isoform>
</comment>
<comment type="similarity">
    <text evidence="5">Belongs to the krueppel C2H2-type zinc-finger protein family.</text>
</comment>
<comment type="sequence caution" evidence="5">
    <conflict type="erroneous initiation">
        <sequence resource="EMBL-CDS" id="BAC41402"/>
    </conflict>
    <text>Extended N-terminus.</text>
</comment>
<reference key="1">
    <citation type="journal article" date="2002" name="DNA Res.">
        <title>Prediction of the coding sequences of mouse homologues of KIAA gene: I. The complete nucleotide sequences of 100 mouse KIAA-homologous cDNAs identified by screening of terminal sequences of cDNA clones randomly sampled from size-fractionated libraries.</title>
        <authorList>
            <person name="Okazaki N."/>
            <person name="Kikuno R."/>
            <person name="Ohara R."/>
            <person name="Inamoto S."/>
            <person name="Hara Y."/>
            <person name="Nagase T."/>
            <person name="Ohara O."/>
            <person name="Koga H."/>
        </authorList>
    </citation>
    <scope>NUCLEOTIDE SEQUENCE [LARGE SCALE MRNA] (ISOFORM 1)</scope>
    <source>
        <tissue>Brain</tissue>
    </source>
</reference>
<reference key="2">
    <citation type="journal article" date="2005" name="Science">
        <title>The transcriptional landscape of the mammalian genome.</title>
        <authorList>
            <person name="Carninci P."/>
            <person name="Kasukawa T."/>
            <person name="Katayama S."/>
            <person name="Gough J."/>
            <person name="Frith M.C."/>
            <person name="Maeda N."/>
            <person name="Oyama R."/>
            <person name="Ravasi T."/>
            <person name="Lenhard B."/>
            <person name="Wells C."/>
            <person name="Kodzius R."/>
            <person name="Shimokawa K."/>
            <person name="Bajic V.B."/>
            <person name="Brenner S.E."/>
            <person name="Batalov S."/>
            <person name="Forrest A.R."/>
            <person name="Zavolan M."/>
            <person name="Davis M.J."/>
            <person name="Wilming L.G."/>
            <person name="Aidinis V."/>
            <person name="Allen J.E."/>
            <person name="Ambesi-Impiombato A."/>
            <person name="Apweiler R."/>
            <person name="Aturaliya R.N."/>
            <person name="Bailey T.L."/>
            <person name="Bansal M."/>
            <person name="Baxter L."/>
            <person name="Beisel K.W."/>
            <person name="Bersano T."/>
            <person name="Bono H."/>
            <person name="Chalk A.M."/>
            <person name="Chiu K.P."/>
            <person name="Choudhary V."/>
            <person name="Christoffels A."/>
            <person name="Clutterbuck D.R."/>
            <person name="Crowe M.L."/>
            <person name="Dalla E."/>
            <person name="Dalrymple B.P."/>
            <person name="de Bono B."/>
            <person name="Della Gatta G."/>
            <person name="di Bernardo D."/>
            <person name="Down T."/>
            <person name="Engstrom P."/>
            <person name="Fagiolini M."/>
            <person name="Faulkner G."/>
            <person name="Fletcher C.F."/>
            <person name="Fukushima T."/>
            <person name="Furuno M."/>
            <person name="Futaki S."/>
            <person name="Gariboldi M."/>
            <person name="Georgii-Hemming P."/>
            <person name="Gingeras T.R."/>
            <person name="Gojobori T."/>
            <person name="Green R.E."/>
            <person name="Gustincich S."/>
            <person name="Harbers M."/>
            <person name="Hayashi Y."/>
            <person name="Hensch T.K."/>
            <person name="Hirokawa N."/>
            <person name="Hill D."/>
            <person name="Huminiecki L."/>
            <person name="Iacono M."/>
            <person name="Ikeo K."/>
            <person name="Iwama A."/>
            <person name="Ishikawa T."/>
            <person name="Jakt M."/>
            <person name="Kanapin A."/>
            <person name="Katoh M."/>
            <person name="Kawasawa Y."/>
            <person name="Kelso J."/>
            <person name="Kitamura H."/>
            <person name="Kitano H."/>
            <person name="Kollias G."/>
            <person name="Krishnan S.P."/>
            <person name="Kruger A."/>
            <person name="Kummerfeld S.K."/>
            <person name="Kurochkin I.V."/>
            <person name="Lareau L.F."/>
            <person name="Lazarevic D."/>
            <person name="Lipovich L."/>
            <person name="Liu J."/>
            <person name="Liuni S."/>
            <person name="McWilliam S."/>
            <person name="Madan Babu M."/>
            <person name="Madera M."/>
            <person name="Marchionni L."/>
            <person name="Matsuda H."/>
            <person name="Matsuzawa S."/>
            <person name="Miki H."/>
            <person name="Mignone F."/>
            <person name="Miyake S."/>
            <person name="Morris K."/>
            <person name="Mottagui-Tabar S."/>
            <person name="Mulder N."/>
            <person name="Nakano N."/>
            <person name="Nakauchi H."/>
            <person name="Ng P."/>
            <person name="Nilsson R."/>
            <person name="Nishiguchi S."/>
            <person name="Nishikawa S."/>
            <person name="Nori F."/>
            <person name="Ohara O."/>
            <person name="Okazaki Y."/>
            <person name="Orlando V."/>
            <person name="Pang K.C."/>
            <person name="Pavan W.J."/>
            <person name="Pavesi G."/>
            <person name="Pesole G."/>
            <person name="Petrovsky N."/>
            <person name="Piazza S."/>
            <person name="Reed J."/>
            <person name="Reid J.F."/>
            <person name="Ring B.Z."/>
            <person name="Ringwald M."/>
            <person name="Rost B."/>
            <person name="Ruan Y."/>
            <person name="Salzberg S.L."/>
            <person name="Sandelin A."/>
            <person name="Schneider C."/>
            <person name="Schoenbach C."/>
            <person name="Sekiguchi K."/>
            <person name="Semple C.A."/>
            <person name="Seno S."/>
            <person name="Sessa L."/>
            <person name="Sheng Y."/>
            <person name="Shibata Y."/>
            <person name="Shimada H."/>
            <person name="Shimada K."/>
            <person name="Silva D."/>
            <person name="Sinclair B."/>
            <person name="Sperling S."/>
            <person name="Stupka E."/>
            <person name="Sugiura K."/>
            <person name="Sultana R."/>
            <person name="Takenaka Y."/>
            <person name="Taki K."/>
            <person name="Tammoja K."/>
            <person name="Tan S.L."/>
            <person name="Tang S."/>
            <person name="Taylor M.S."/>
            <person name="Tegner J."/>
            <person name="Teichmann S.A."/>
            <person name="Ueda H.R."/>
            <person name="van Nimwegen E."/>
            <person name="Verardo R."/>
            <person name="Wei C.L."/>
            <person name="Yagi K."/>
            <person name="Yamanishi H."/>
            <person name="Zabarovsky E."/>
            <person name="Zhu S."/>
            <person name="Zimmer A."/>
            <person name="Hide W."/>
            <person name="Bult C."/>
            <person name="Grimmond S.M."/>
            <person name="Teasdale R.D."/>
            <person name="Liu E.T."/>
            <person name="Brusic V."/>
            <person name="Quackenbush J."/>
            <person name="Wahlestedt C."/>
            <person name="Mattick J.S."/>
            <person name="Hume D.A."/>
            <person name="Kai C."/>
            <person name="Sasaki D."/>
            <person name="Tomaru Y."/>
            <person name="Fukuda S."/>
            <person name="Kanamori-Katayama M."/>
            <person name="Suzuki M."/>
            <person name="Aoki J."/>
            <person name="Arakawa T."/>
            <person name="Iida J."/>
            <person name="Imamura K."/>
            <person name="Itoh M."/>
            <person name="Kato T."/>
            <person name="Kawaji H."/>
            <person name="Kawagashira N."/>
            <person name="Kawashima T."/>
            <person name="Kojima M."/>
            <person name="Kondo S."/>
            <person name="Konno H."/>
            <person name="Nakano K."/>
            <person name="Ninomiya N."/>
            <person name="Nishio T."/>
            <person name="Okada M."/>
            <person name="Plessy C."/>
            <person name="Shibata K."/>
            <person name="Shiraki T."/>
            <person name="Suzuki S."/>
            <person name="Tagami M."/>
            <person name="Waki K."/>
            <person name="Watahiki A."/>
            <person name="Okamura-Oho Y."/>
            <person name="Suzuki H."/>
            <person name="Kawai J."/>
            <person name="Hayashizaki Y."/>
        </authorList>
    </citation>
    <scope>NUCLEOTIDE SEQUENCE [LARGE SCALE MRNA] (ISOFORM 2)</scope>
    <source>
        <strain>C57BL/6J</strain>
        <tissue>Head</tissue>
        <tissue>Heart</tissue>
    </source>
</reference>
<reference key="3">
    <citation type="journal article" date="2009" name="PLoS Biol.">
        <title>Lineage-specific biology revealed by a finished genome assembly of the mouse.</title>
        <authorList>
            <person name="Church D.M."/>
            <person name="Goodstadt L."/>
            <person name="Hillier L.W."/>
            <person name="Zody M.C."/>
            <person name="Goldstein S."/>
            <person name="She X."/>
            <person name="Bult C.J."/>
            <person name="Agarwala R."/>
            <person name="Cherry J.L."/>
            <person name="DiCuccio M."/>
            <person name="Hlavina W."/>
            <person name="Kapustin Y."/>
            <person name="Meric P."/>
            <person name="Maglott D."/>
            <person name="Birtle Z."/>
            <person name="Marques A.C."/>
            <person name="Graves T."/>
            <person name="Zhou S."/>
            <person name="Teague B."/>
            <person name="Potamousis K."/>
            <person name="Churas C."/>
            <person name="Place M."/>
            <person name="Herschleb J."/>
            <person name="Runnheim R."/>
            <person name="Forrest D."/>
            <person name="Amos-Landgraf J."/>
            <person name="Schwartz D.C."/>
            <person name="Cheng Z."/>
            <person name="Lindblad-Toh K."/>
            <person name="Eichler E.E."/>
            <person name="Ponting C.P."/>
        </authorList>
    </citation>
    <scope>NUCLEOTIDE SEQUENCE [LARGE SCALE GENOMIC DNA]</scope>
    <source>
        <strain>C57BL/6J</strain>
    </source>
</reference>
<reference key="4">
    <citation type="submission" date="2005-07" db="EMBL/GenBank/DDBJ databases">
        <authorList>
            <person name="Mural R.J."/>
            <person name="Adams M.D."/>
            <person name="Myers E.W."/>
            <person name="Smith H.O."/>
            <person name="Venter J.C."/>
        </authorList>
    </citation>
    <scope>NUCLEOTIDE SEQUENCE [LARGE SCALE GENOMIC DNA]</scope>
</reference>